<comment type="catalytic activity">
    <reaction evidence="1">
        <text>tRNA(Cys) + L-cysteine + ATP = L-cysteinyl-tRNA(Cys) + AMP + diphosphate</text>
        <dbReference type="Rhea" id="RHEA:17773"/>
        <dbReference type="Rhea" id="RHEA-COMP:9661"/>
        <dbReference type="Rhea" id="RHEA-COMP:9679"/>
        <dbReference type="ChEBI" id="CHEBI:30616"/>
        <dbReference type="ChEBI" id="CHEBI:33019"/>
        <dbReference type="ChEBI" id="CHEBI:35235"/>
        <dbReference type="ChEBI" id="CHEBI:78442"/>
        <dbReference type="ChEBI" id="CHEBI:78517"/>
        <dbReference type="ChEBI" id="CHEBI:456215"/>
        <dbReference type="EC" id="6.1.1.16"/>
    </reaction>
</comment>
<comment type="cofactor">
    <cofactor evidence="1">
        <name>Zn(2+)</name>
        <dbReference type="ChEBI" id="CHEBI:29105"/>
    </cofactor>
    <text evidence="1">Binds 1 zinc ion per subunit.</text>
</comment>
<comment type="subunit">
    <text evidence="1">Monomer.</text>
</comment>
<comment type="subcellular location">
    <subcellularLocation>
        <location evidence="1">Cytoplasm</location>
    </subcellularLocation>
</comment>
<comment type="similarity">
    <text evidence="1">Belongs to the class-I aminoacyl-tRNA synthetase family.</text>
</comment>
<evidence type="ECO:0000255" key="1">
    <source>
        <dbReference type="HAMAP-Rule" id="MF_00041"/>
    </source>
</evidence>
<keyword id="KW-0030">Aminoacyl-tRNA synthetase</keyword>
<keyword id="KW-0067">ATP-binding</keyword>
<keyword id="KW-0963">Cytoplasm</keyword>
<keyword id="KW-0436">Ligase</keyword>
<keyword id="KW-0479">Metal-binding</keyword>
<keyword id="KW-0547">Nucleotide-binding</keyword>
<keyword id="KW-0597">Phosphoprotein</keyword>
<keyword id="KW-0648">Protein biosynthesis</keyword>
<keyword id="KW-0862">Zinc</keyword>
<organism>
    <name type="scientific">Bacillus cereus (strain G9842)</name>
    <dbReference type="NCBI Taxonomy" id="405531"/>
    <lineage>
        <taxon>Bacteria</taxon>
        <taxon>Bacillati</taxon>
        <taxon>Bacillota</taxon>
        <taxon>Bacilli</taxon>
        <taxon>Bacillales</taxon>
        <taxon>Bacillaceae</taxon>
        <taxon>Bacillus</taxon>
        <taxon>Bacillus cereus group</taxon>
    </lineage>
</organism>
<sequence>MTIHIYNTLTRQKEEFVPLEENKVKMYVCGPTVYNYIHIGNARPPMVFDTVRRYLEYKGYDVQYVSNFTDVDDKLIKAANELGEDVPTIADRFVEAYFEDVTALGCKHATVHPRVTENMDIIIEFIQELVNKGYAYESEGDVYFKTKEFEGYGKLSHQPIADLRHGARIEVGEKKQDPLDFALWKAAKEGEIFWESPWGQGRPGWHIECSAMARKYLGDTIDIHAGGQDLAFPHHENEIAQSEALTGKTFARYWMHNGYININNEKMSKSLGNFILVHDIIKQYDPQLIRFFMLSVHYRHPINFSEELLQSTNNGLERIKTAYGNLKHRMESSTDLTDHNEKWLVEIEKFQTAFEEAMNDDFNTANAITELYNVANYANQYLLEEHTSKVVIEAYVKQLETLFDILGLELTQEELLDEEIEELIQKRIEARKNRDFALSDQIRDDLKGRNIILEDTAQGTRWKRG</sequence>
<gene>
    <name evidence="1" type="primary">cysS</name>
    <name type="ordered locus">BCG9842_B5216</name>
</gene>
<dbReference type="EC" id="6.1.1.16" evidence="1"/>
<dbReference type="EMBL" id="CP001186">
    <property type="protein sequence ID" value="ACK93447.1"/>
    <property type="molecule type" value="Genomic_DNA"/>
</dbReference>
<dbReference type="RefSeq" id="WP_000152281.1">
    <property type="nucleotide sequence ID" value="NC_011772.1"/>
</dbReference>
<dbReference type="SMR" id="B7ISZ9"/>
<dbReference type="KEGG" id="bcg:BCG9842_B5216"/>
<dbReference type="HOGENOM" id="CLU_013528_0_1_9"/>
<dbReference type="Proteomes" id="UP000006744">
    <property type="component" value="Chromosome"/>
</dbReference>
<dbReference type="GO" id="GO:0005829">
    <property type="term" value="C:cytosol"/>
    <property type="evidence" value="ECO:0007669"/>
    <property type="project" value="TreeGrafter"/>
</dbReference>
<dbReference type="GO" id="GO:0005524">
    <property type="term" value="F:ATP binding"/>
    <property type="evidence" value="ECO:0007669"/>
    <property type="project" value="UniProtKB-UniRule"/>
</dbReference>
<dbReference type="GO" id="GO:0004817">
    <property type="term" value="F:cysteine-tRNA ligase activity"/>
    <property type="evidence" value="ECO:0007669"/>
    <property type="project" value="UniProtKB-UniRule"/>
</dbReference>
<dbReference type="GO" id="GO:0008270">
    <property type="term" value="F:zinc ion binding"/>
    <property type="evidence" value="ECO:0007669"/>
    <property type="project" value="UniProtKB-UniRule"/>
</dbReference>
<dbReference type="GO" id="GO:0006423">
    <property type="term" value="P:cysteinyl-tRNA aminoacylation"/>
    <property type="evidence" value="ECO:0007669"/>
    <property type="project" value="UniProtKB-UniRule"/>
</dbReference>
<dbReference type="CDD" id="cd00672">
    <property type="entry name" value="CysRS_core"/>
    <property type="match status" value="1"/>
</dbReference>
<dbReference type="FunFam" id="1.20.120.1910:FF:000002">
    <property type="entry name" value="Cysteine--tRNA ligase"/>
    <property type="match status" value="1"/>
</dbReference>
<dbReference type="FunFam" id="3.40.50.620:FF:000009">
    <property type="entry name" value="Cysteine--tRNA ligase"/>
    <property type="match status" value="1"/>
</dbReference>
<dbReference type="Gene3D" id="1.20.120.1910">
    <property type="entry name" value="Cysteine-tRNA ligase, C-terminal anti-codon recognition domain"/>
    <property type="match status" value="1"/>
</dbReference>
<dbReference type="Gene3D" id="3.40.50.620">
    <property type="entry name" value="HUPs"/>
    <property type="match status" value="1"/>
</dbReference>
<dbReference type="HAMAP" id="MF_00041">
    <property type="entry name" value="Cys_tRNA_synth"/>
    <property type="match status" value="1"/>
</dbReference>
<dbReference type="InterPro" id="IPR015803">
    <property type="entry name" value="Cys-tRNA-ligase"/>
</dbReference>
<dbReference type="InterPro" id="IPR015273">
    <property type="entry name" value="Cys-tRNA-synt_Ia_DALR"/>
</dbReference>
<dbReference type="InterPro" id="IPR024909">
    <property type="entry name" value="Cys-tRNA/MSH_ligase"/>
</dbReference>
<dbReference type="InterPro" id="IPR014729">
    <property type="entry name" value="Rossmann-like_a/b/a_fold"/>
</dbReference>
<dbReference type="InterPro" id="IPR032678">
    <property type="entry name" value="tRNA-synt_1_cat_dom"/>
</dbReference>
<dbReference type="InterPro" id="IPR009080">
    <property type="entry name" value="tRNAsynth_Ia_anticodon-bd"/>
</dbReference>
<dbReference type="NCBIfam" id="TIGR00435">
    <property type="entry name" value="cysS"/>
    <property type="match status" value="1"/>
</dbReference>
<dbReference type="PANTHER" id="PTHR10890:SF3">
    <property type="entry name" value="CYSTEINE--TRNA LIGASE, CYTOPLASMIC"/>
    <property type="match status" value="1"/>
</dbReference>
<dbReference type="PANTHER" id="PTHR10890">
    <property type="entry name" value="CYSTEINYL-TRNA SYNTHETASE"/>
    <property type="match status" value="1"/>
</dbReference>
<dbReference type="Pfam" id="PF09190">
    <property type="entry name" value="DALR_2"/>
    <property type="match status" value="1"/>
</dbReference>
<dbReference type="Pfam" id="PF01406">
    <property type="entry name" value="tRNA-synt_1e"/>
    <property type="match status" value="1"/>
</dbReference>
<dbReference type="PRINTS" id="PR00983">
    <property type="entry name" value="TRNASYNTHCYS"/>
</dbReference>
<dbReference type="SMART" id="SM00840">
    <property type="entry name" value="DALR_2"/>
    <property type="match status" value="1"/>
</dbReference>
<dbReference type="SUPFAM" id="SSF47323">
    <property type="entry name" value="Anticodon-binding domain of a subclass of class I aminoacyl-tRNA synthetases"/>
    <property type="match status" value="1"/>
</dbReference>
<dbReference type="SUPFAM" id="SSF52374">
    <property type="entry name" value="Nucleotidylyl transferase"/>
    <property type="match status" value="1"/>
</dbReference>
<name>SYC_BACC2</name>
<reference key="1">
    <citation type="submission" date="2008-10" db="EMBL/GenBank/DDBJ databases">
        <title>Genome sequence of Bacillus cereus G9842.</title>
        <authorList>
            <person name="Dodson R.J."/>
            <person name="Durkin A.S."/>
            <person name="Rosovitz M.J."/>
            <person name="Rasko D.A."/>
            <person name="Hoffmaster A."/>
            <person name="Ravel J."/>
            <person name="Sutton G."/>
        </authorList>
    </citation>
    <scope>NUCLEOTIDE SEQUENCE [LARGE SCALE GENOMIC DNA]</scope>
    <source>
        <strain>G9842</strain>
    </source>
</reference>
<proteinExistence type="inferred from homology"/>
<protein>
    <recommendedName>
        <fullName evidence="1">Cysteine--tRNA ligase</fullName>
        <ecNumber evidence="1">6.1.1.16</ecNumber>
    </recommendedName>
    <alternativeName>
        <fullName evidence="1">Cysteinyl-tRNA synthetase</fullName>
        <shortName evidence="1">CysRS</shortName>
    </alternativeName>
</protein>
<accession>B7ISZ9</accession>
<feature type="chain" id="PRO_1000199040" description="Cysteine--tRNA ligase">
    <location>
        <begin position="1"/>
        <end position="465"/>
    </location>
</feature>
<feature type="short sequence motif" description="'HIGH' region">
    <location>
        <begin position="31"/>
        <end position="41"/>
    </location>
</feature>
<feature type="short sequence motif" description="'KMSKS' region">
    <location>
        <begin position="266"/>
        <end position="270"/>
    </location>
</feature>
<feature type="binding site" evidence="1">
    <location>
        <position position="29"/>
    </location>
    <ligand>
        <name>Zn(2+)</name>
        <dbReference type="ChEBI" id="CHEBI:29105"/>
    </ligand>
</feature>
<feature type="binding site" evidence="1">
    <location>
        <position position="209"/>
    </location>
    <ligand>
        <name>Zn(2+)</name>
        <dbReference type="ChEBI" id="CHEBI:29105"/>
    </ligand>
</feature>
<feature type="binding site" evidence="1">
    <location>
        <position position="234"/>
    </location>
    <ligand>
        <name>Zn(2+)</name>
        <dbReference type="ChEBI" id="CHEBI:29105"/>
    </ligand>
</feature>
<feature type="binding site" evidence="1">
    <location>
        <position position="238"/>
    </location>
    <ligand>
        <name>Zn(2+)</name>
        <dbReference type="ChEBI" id="CHEBI:29105"/>
    </ligand>
</feature>
<feature type="binding site" evidence="1">
    <location>
        <position position="269"/>
    </location>
    <ligand>
        <name>ATP</name>
        <dbReference type="ChEBI" id="CHEBI:30616"/>
    </ligand>
</feature>
<feature type="modified residue" description="Phosphoserine" evidence="1">
    <location>
        <position position="270"/>
    </location>
</feature>